<organism>
    <name type="scientific">Staphylococcus aureus (strain NCTC 8325 / PS 47)</name>
    <dbReference type="NCBI Taxonomy" id="93061"/>
    <lineage>
        <taxon>Bacteria</taxon>
        <taxon>Bacillati</taxon>
        <taxon>Bacillota</taxon>
        <taxon>Bacilli</taxon>
        <taxon>Bacillales</taxon>
        <taxon>Staphylococcaceae</taxon>
        <taxon>Staphylococcus</taxon>
    </lineage>
</organism>
<accession>Q2G1J0</accession>
<feature type="chain" id="PRO_0000290788" description="Putative aldehyde dehydrogenase AldA">
    <location>
        <begin position="1"/>
        <end position="495"/>
    </location>
</feature>
<feature type="active site" evidence="1">
    <location>
        <position position="256"/>
    </location>
</feature>
<feature type="active site" evidence="1">
    <location>
        <position position="290"/>
    </location>
</feature>
<feature type="binding site" evidence="1">
    <location>
        <begin position="212"/>
        <end position="218"/>
    </location>
    <ligand>
        <name>NAD(+)</name>
        <dbReference type="ChEBI" id="CHEBI:57540"/>
    </ligand>
</feature>
<evidence type="ECO:0000250" key="1"/>
<evidence type="ECO:0000305" key="2"/>
<dbReference type="EC" id="1.2.1.3"/>
<dbReference type="EMBL" id="CP000253">
    <property type="protein sequence ID" value="ABD29313.1"/>
    <property type="molecule type" value="Genomic_DNA"/>
</dbReference>
<dbReference type="RefSeq" id="WP_000290400.1">
    <property type="nucleotide sequence ID" value="NZ_LS483365.1"/>
</dbReference>
<dbReference type="RefSeq" id="YP_498732.1">
    <property type="nucleotide sequence ID" value="NC_007795.1"/>
</dbReference>
<dbReference type="SMR" id="Q2G1J0"/>
<dbReference type="STRING" id="93061.SAOUHSC_00132"/>
<dbReference type="PaxDb" id="1280-SAXN108_0153"/>
<dbReference type="GeneID" id="3919841"/>
<dbReference type="KEGG" id="sao:SAOUHSC_00132"/>
<dbReference type="PATRIC" id="fig|93061.5.peg.124"/>
<dbReference type="eggNOG" id="COG1012">
    <property type="taxonomic scope" value="Bacteria"/>
</dbReference>
<dbReference type="HOGENOM" id="CLU_005391_0_2_9"/>
<dbReference type="OrthoDB" id="9762913at2"/>
<dbReference type="PRO" id="PR:Q2G1J0"/>
<dbReference type="Proteomes" id="UP000008816">
    <property type="component" value="Chromosome"/>
</dbReference>
<dbReference type="GO" id="GO:0004029">
    <property type="term" value="F:aldehyde dehydrogenase (NAD+) activity"/>
    <property type="evidence" value="ECO:0007669"/>
    <property type="project" value="UniProtKB-EC"/>
</dbReference>
<dbReference type="CDD" id="cd07117">
    <property type="entry name" value="ALDH_StaphAldA1"/>
    <property type="match status" value="1"/>
</dbReference>
<dbReference type="FunFam" id="3.40.309.10:FF:000012">
    <property type="entry name" value="Betaine aldehyde dehydrogenase"/>
    <property type="match status" value="1"/>
</dbReference>
<dbReference type="FunFam" id="3.40.605.10:FF:000007">
    <property type="entry name" value="NAD/NADP-dependent betaine aldehyde dehydrogenase"/>
    <property type="match status" value="1"/>
</dbReference>
<dbReference type="Gene3D" id="3.40.605.10">
    <property type="entry name" value="Aldehyde Dehydrogenase, Chain A, domain 1"/>
    <property type="match status" value="1"/>
</dbReference>
<dbReference type="Gene3D" id="3.40.309.10">
    <property type="entry name" value="Aldehyde Dehydrogenase, Chain A, domain 2"/>
    <property type="match status" value="1"/>
</dbReference>
<dbReference type="InterPro" id="IPR016161">
    <property type="entry name" value="Ald_DH/histidinol_DH"/>
</dbReference>
<dbReference type="InterPro" id="IPR016163">
    <property type="entry name" value="Ald_DH_C"/>
</dbReference>
<dbReference type="InterPro" id="IPR016160">
    <property type="entry name" value="Ald_DH_CS_CYS"/>
</dbReference>
<dbReference type="InterPro" id="IPR029510">
    <property type="entry name" value="Ald_DH_CS_GLU"/>
</dbReference>
<dbReference type="InterPro" id="IPR016162">
    <property type="entry name" value="Ald_DH_N"/>
</dbReference>
<dbReference type="InterPro" id="IPR015590">
    <property type="entry name" value="Aldehyde_DH_dom"/>
</dbReference>
<dbReference type="PANTHER" id="PTHR43111">
    <property type="entry name" value="ALDEHYDE DEHYDROGENASE B-RELATED"/>
    <property type="match status" value="1"/>
</dbReference>
<dbReference type="PANTHER" id="PTHR43111:SF1">
    <property type="entry name" value="ALDEHYDE DEHYDROGENASE B-RELATED"/>
    <property type="match status" value="1"/>
</dbReference>
<dbReference type="Pfam" id="PF00171">
    <property type="entry name" value="Aldedh"/>
    <property type="match status" value="1"/>
</dbReference>
<dbReference type="SUPFAM" id="SSF53720">
    <property type="entry name" value="ALDH-like"/>
    <property type="match status" value="1"/>
</dbReference>
<dbReference type="PROSITE" id="PS00070">
    <property type="entry name" value="ALDEHYDE_DEHYDR_CYS"/>
    <property type="match status" value="1"/>
</dbReference>
<dbReference type="PROSITE" id="PS00687">
    <property type="entry name" value="ALDEHYDE_DEHYDR_GLU"/>
    <property type="match status" value="1"/>
</dbReference>
<keyword id="KW-0520">NAD</keyword>
<keyword id="KW-0560">Oxidoreductase</keyword>
<keyword id="KW-1185">Reference proteome</keyword>
<sequence>MAVNVRDYIAENYGLFINGEFVKGSSDETIEVTNPATGETLSHITRAKDKDVDHAVKVAQEAFESWSLTSKSERAQMLRDIGDKLMAQKDKIAMIETLNNGKPIRETTAIDIPFAARHFHYFASVIETEEGTVNDIDKDTMSIVRHEPIGVVGAVVAWNFPMLLAAWKIAPAIAAGNTIVIQPSSSTPLSLLEVAKIFQEVLPKGVVNILTGKGSESGNAIFNHDGVDKLSFTGSTDVGYQVAEAAAKHLVPATLELGGKSANIILDDANLDLAVEGIQLGILFNQGEVCSAGSRLLVHEKIYDQLVPRLQEAFSNIKVGNPQDEATQMGSQTGKDQLDKIQSYIDAAKESDAQILAGGHRLTENGLDKGFFFEPTLIAVPDNHHKLAQEEIFGPVLTVIKVKDDQEAIDIANDSEYGLAGGVFSQNITRALNIAKAVRTGRIWINTYNQVPEGAPFGGYKKSGIGRETYKGALSNYQQVKNIYIDTSNALKGLY</sequence>
<name>ALDA_STAA8</name>
<proteinExistence type="inferred from homology"/>
<comment type="catalytic activity">
    <reaction>
        <text>an aldehyde + NAD(+) + H2O = a carboxylate + NADH + 2 H(+)</text>
        <dbReference type="Rhea" id="RHEA:16185"/>
        <dbReference type="ChEBI" id="CHEBI:15377"/>
        <dbReference type="ChEBI" id="CHEBI:15378"/>
        <dbReference type="ChEBI" id="CHEBI:17478"/>
        <dbReference type="ChEBI" id="CHEBI:29067"/>
        <dbReference type="ChEBI" id="CHEBI:57540"/>
        <dbReference type="ChEBI" id="CHEBI:57945"/>
        <dbReference type="EC" id="1.2.1.3"/>
    </reaction>
</comment>
<comment type="similarity">
    <text evidence="2">Belongs to the aldehyde dehydrogenase family.</text>
</comment>
<protein>
    <recommendedName>
        <fullName>Putative aldehyde dehydrogenase AldA</fullName>
        <ecNumber>1.2.1.3</ecNumber>
    </recommendedName>
</protein>
<reference key="1">
    <citation type="book" date="2006" name="Gram positive pathogens, 2nd edition">
        <title>The Staphylococcus aureus NCTC 8325 genome.</title>
        <editorList>
            <person name="Fischetti V."/>
            <person name="Novick R."/>
            <person name="Ferretti J."/>
            <person name="Portnoy D."/>
            <person name="Rood J."/>
        </editorList>
        <authorList>
            <person name="Gillaspy A.F."/>
            <person name="Worrell V."/>
            <person name="Orvis J."/>
            <person name="Roe B.A."/>
            <person name="Dyer D.W."/>
            <person name="Iandolo J.J."/>
        </authorList>
    </citation>
    <scope>NUCLEOTIDE SEQUENCE [LARGE SCALE GENOMIC DNA]</scope>
    <source>
        <strain>NCTC 8325 / PS 47</strain>
    </source>
</reference>
<gene>
    <name type="primary">aldA</name>
    <name type="ordered locus">SAOUHSC_00132</name>
</gene>